<accession>A9KGU5</accession>
<name>SYP_COXBN</name>
<protein>
    <recommendedName>
        <fullName evidence="1">Proline--tRNA ligase</fullName>
        <ecNumber evidence="1">6.1.1.15</ecNumber>
    </recommendedName>
    <alternativeName>
        <fullName evidence="1">Prolyl-tRNA synthetase</fullName>
        <shortName evidence="1">ProRS</shortName>
    </alternativeName>
</protein>
<proteinExistence type="inferred from homology"/>
<sequence>MKVSQFFLATVKETPADAVLASHQLMIRAGMLRKLASGLYTWLPLGLRVLQKVADVVREEMNRAGALELLMPIVQPASLWQESGRWEAYGAELLRIMDRHQNGFCFGPTHEEVITDIARQELKSYKQLPLNFYQIQTKFRDEIRPRFGVMRSREFLMKDAYSFDLDEKGMQAAYEKMFDAYRRIFTRLGLNFRAVLADTGAIGGDYSHEFQVLADVGEDTVVYSDESDYAANIEKAAAQAPQGERVKPVAEIKKIATPGVRTIKQLADKANILPEKGVKTLIVKGDESSLIALILRGDHELNDVKAQHLPGVAFPLQFADEKEIREAIGCGPGSLGPVNLPIPFIVDRDAAQLVDFSCGANEDDFHWINVNWERDVPLGSVADIRKVVEGDISPDGKGRLRFARGIEVGQVFQLGDKYSRKMNATVVDELGKSRYLQMGCYGIGVSRTVAAAIEQNHDERGIIWPTPMAPFFIALVPVNMHKSYRVREACEKLYNELIDAGYEVLWDDRKERPGVMFADMDLIGIPHRLVISESGLDRGIVEYKARKSKEAENVSLENVLSVFR</sequence>
<dbReference type="EC" id="6.1.1.15" evidence="1"/>
<dbReference type="EMBL" id="CP000733">
    <property type="protein sequence ID" value="ABS76694.2"/>
    <property type="status" value="ALT_INIT"/>
    <property type="molecule type" value="Genomic_DNA"/>
</dbReference>
<dbReference type="SMR" id="A9KGU5"/>
<dbReference type="KEGG" id="cbd:CBUD_2026"/>
<dbReference type="HOGENOM" id="CLU_016739_0_0_6"/>
<dbReference type="Proteomes" id="UP000008555">
    <property type="component" value="Chromosome"/>
</dbReference>
<dbReference type="GO" id="GO:0005829">
    <property type="term" value="C:cytosol"/>
    <property type="evidence" value="ECO:0007669"/>
    <property type="project" value="TreeGrafter"/>
</dbReference>
<dbReference type="GO" id="GO:0002161">
    <property type="term" value="F:aminoacyl-tRNA deacylase activity"/>
    <property type="evidence" value="ECO:0007669"/>
    <property type="project" value="InterPro"/>
</dbReference>
<dbReference type="GO" id="GO:0005524">
    <property type="term" value="F:ATP binding"/>
    <property type="evidence" value="ECO:0007669"/>
    <property type="project" value="UniProtKB-UniRule"/>
</dbReference>
<dbReference type="GO" id="GO:0004827">
    <property type="term" value="F:proline-tRNA ligase activity"/>
    <property type="evidence" value="ECO:0007669"/>
    <property type="project" value="UniProtKB-UniRule"/>
</dbReference>
<dbReference type="GO" id="GO:0006433">
    <property type="term" value="P:prolyl-tRNA aminoacylation"/>
    <property type="evidence" value="ECO:0007669"/>
    <property type="project" value="UniProtKB-UniRule"/>
</dbReference>
<dbReference type="CDD" id="cd04334">
    <property type="entry name" value="ProRS-INS"/>
    <property type="match status" value="1"/>
</dbReference>
<dbReference type="CDD" id="cd00861">
    <property type="entry name" value="ProRS_anticodon_short"/>
    <property type="match status" value="1"/>
</dbReference>
<dbReference type="CDD" id="cd00779">
    <property type="entry name" value="ProRS_core_prok"/>
    <property type="match status" value="1"/>
</dbReference>
<dbReference type="FunFam" id="3.30.930.10:FF:000043">
    <property type="entry name" value="Proline--tRNA ligase"/>
    <property type="match status" value="1"/>
</dbReference>
<dbReference type="FunFam" id="3.40.50.800:FF:000006">
    <property type="entry name" value="Proline--tRNA ligase"/>
    <property type="match status" value="1"/>
</dbReference>
<dbReference type="Gene3D" id="3.40.50.800">
    <property type="entry name" value="Anticodon-binding domain"/>
    <property type="match status" value="1"/>
</dbReference>
<dbReference type="Gene3D" id="3.30.930.10">
    <property type="entry name" value="Bira Bifunctional Protein, Domain 2"/>
    <property type="match status" value="2"/>
</dbReference>
<dbReference type="Gene3D" id="3.90.960.10">
    <property type="entry name" value="YbaK/aminoacyl-tRNA synthetase-associated domain"/>
    <property type="match status" value="1"/>
</dbReference>
<dbReference type="HAMAP" id="MF_01569">
    <property type="entry name" value="Pro_tRNA_synth_type1"/>
    <property type="match status" value="1"/>
</dbReference>
<dbReference type="InterPro" id="IPR002314">
    <property type="entry name" value="aa-tRNA-synt_IIb"/>
</dbReference>
<dbReference type="InterPro" id="IPR006195">
    <property type="entry name" value="aa-tRNA-synth_II"/>
</dbReference>
<dbReference type="InterPro" id="IPR045864">
    <property type="entry name" value="aa-tRNA-synth_II/BPL/LPL"/>
</dbReference>
<dbReference type="InterPro" id="IPR004154">
    <property type="entry name" value="Anticodon-bd"/>
</dbReference>
<dbReference type="InterPro" id="IPR036621">
    <property type="entry name" value="Anticodon-bd_dom_sf"/>
</dbReference>
<dbReference type="InterPro" id="IPR002316">
    <property type="entry name" value="Pro-tRNA-ligase_IIa"/>
</dbReference>
<dbReference type="InterPro" id="IPR004500">
    <property type="entry name" value="Pro-tRNA-synth_IIa_bac-type"/>
</dbReference>
<dbReference type="InterPro" id="IPR023717">
    <property type="entry name" value="Pro-tRNA-Synthase_IIa_type1"/>
</dbReference>
<dbReference type="InterPro" id="IPR050062">
    <property type="entry name" value="Pro-tRNA_synthetase"/>
</dbReference>
<dbReference type="InterPro" id="IPR044140">
    <property type="entry name" value="ProRS_anticodon_short"/>
</dbReference>
<dbReference type="InterPro" id="IPR033730">
    <property type="entry name" value="ProRS_core_prok"/>
</dbReference>
<dbReference type="InterPro" id="IPR036754">
    <property type="entry name" value="YbaK/aa-tRNA-synt-asso_dom_sf"/>
</dbReference>
<dbReference type="InterPro" id="IPR007214">
    <property type="entry name" value="YbaK/aa-tRNA-synth-assoc-dom"/>
</dbReference>
<dbReference type="NCBIfam" id="NF006625">
    <property type="entry name" value="PRK09194.1"/>
    <property type="match status" value="1"/>
</dbReference>
<dbReference type="NCBIfam" id="TIGR00409">
    <property type="entry name" value="proS_fam_II"/>
    <property type="match status" value="1"/>
</dbReference>
<dbReference type="PANTHER" id="PTHR42753">
    <property type="entry name" value="MITOCHONDRIAL RIBOSOME PROTEIN L39/PROLYL-TRNA LIGASE FAMILY MEMBER"/>
    <property type="match status" value="1"/>
</dbReference>
<dbReference type="PANTHER" id="PTHR42753:SF2">
    <property type="entry name" value="PROLINE--TRNA LIGASE"/>
    <property type="match status" value="1"/>
</dbReference>
<dbReference type="Pfam" id="PF03129">
    <property type="entry name" value="HGTP_anticodon"/>
    <property type="match status" value="1"/>
</dbReference>
<dbReference type="Pfam" id="PF00587">
    <property type="entry name" value="tRNA-synt_2b"/>
    <property type="match status" value="1"/>
</dbReference>
<dbReference type="Pfam" id="PF04073">
    <property type="entry name" value="tRNA_edit"/>
    <property type="match status" value="1"/>
</dbReference>
<dbReference type="PIRSF" id="PIRSF001535">
    <property type="entry name" value="ProRS_1"/>
    <property type="match status" value="1"/>
</dbReference>
<dbReference type="PRINTS" id="PR01046">
    <property type="entry name" value="TRNASYNTHPRO"/>
</dbReference>
<dbReference type="SUPFAM" id="SSF52954">
    <property type="entry name" value="Class II aaRS ABD-related"/>
    <property type="match status" value="1"/>
</dbReference>
<dbReference type="SUPFAM" id="SSF55681">
    <property type="entry name" value="Class II aaRS and biotin synthetases"/>
    <property type="match status" value="1"/>
</dbReference>
<dbReference type="SUPFAM" id="SSF55826">
    <property type="entry name" value="YbaK/ProRS associated domain"/>
    <property type="match status" value="1"/>
</dbReference>
<dbReference type="PROSITE" id="PS50862">
    <property type="entry name" value="AA_TRNA_LIGASE_II"/>
    <property type="match status" value="1"/>
</dbReference>
<feature type="chain" id="PRO_1000087836" description="Proline--tRNA ligase">
    <location>
        <begin position="1"/>
        <end position="564"/>
    </location>
</feature>
<evidence type="ECO:0000255" key="1">
    <source>
        <dbReference type="HAMAP-Rule" id="MF_01569"/>
    </source>
</evidence>
<evidence type="ECO:0000305" key="2"/>
<comment type="function">
    <text evidence="1">Catalyzes the attachment of proline to tRNA(Pro) in a two-step reaction: proline is first activated by ATP to form Pro-AMP and then transferred to the acceptor end of tRNA(Pro). As ProRS can inadvertently accommodate and process non-cognate amino acids such as alanine and cysteine, to avoid such errors it has two additional distinct editing activities against alanine. One activity is designated as 'pretransfer' editing and involves the tRNA(Pro)-independent hydrolysis of activated Ala-AMP. The other activity is designated 'posttransfer' editing and involves deacylation of mischarged Ala-tRNA(Pro). The misacylated Cys-tRNA(Pro) is not edited by ProRS.</text>
</comment>
<comment type="catalytic activity">
    <reaction evidence="1">
        <text>tRNA(Pro) + L-proline + ATP = L-prolyl-tRNA(Pro) + AMP + diphosphate</text>
        <dbReference type="Rhea" id="RHEA:14305"/>
        <dbReference type="Rhea" id="RHEA-COMP:9700"/>
        <dbReference type="Rhea" id="RHEA-COMP:9702"/>
        <dbReference type="ChEBI" id="CHEBI:30616"/>
        <dbReference type="ChEBI" id="CHEBI:33019"/>
        <dbReference type="ChEBI" id="CHEBI:60039"/>
        <dbReference type="ChEBI" id="CHEBI:78442"/>
        <dbReference type="ChEBI" id="CHEBI:78532"/>
        <dbReference type="ChEBI" id="CHEBI:456215"/>
        <dbReference type="EC" id="6.1.1.15"/>
    </reaction>
</comment>
<comment type="subunit">
    <text evidence="1">Homodimer.</text>
</comment>
<comment type="subcellular location">
    <subcellularLocation>
        <location evidence="1">Cytoplasm</location>
    </subcellularLocation>
</comment>
<comment type="domain">
    <text evidence="1">Consists of three domains: the N-terminal catalytic domain, the editing domain and the C-terminal anticodon-binding domain.</text>
</comment>
<comment type="similarity">
    <text evidence="1">Belongs to the class-II aminoacyl-tRNA synthetase family. ProS type 1 subfamily.</text>
</comment>
<comment type="sequence caution" evidence="2">
    <conflict type="erroneous initiation">
        <sequence resource="EMBL-CDS" id="ABS76694"/>
    </conflict>
</comment>
<gene>
    <name evidence="1" type="primary">proS</name>
    <name type="ordered locus">CBUD_2026</name>
</gene>
<organism>
    <name type="scientific">Coxiella burnetii (strain Dugway 5J108-111)</name>
    <dbReference type="NCBI Taxonomy" id="434922"/>
    <lineage>
        <taxon>Bacteria</taxon>
        <taxon>Pseudomonadati</taxon>
        <taxon>Pseudomonadota</taxon>
        <taxon>Gammaproteobacteria</taxon>
        <taxon>Legionellales</taxon>
        <taxon>Coxiellaceae</taxon>
        <taxon>Coxiella</taxon>
    </lineage>
</organism>
<reference key="1">
    <citation type="journal article" date="2009" name="Infect. Immun.">
        <title>Comparative genomics reveal extensive transposon-mediated genomic plasticity and diversity among potential effector proteins within the genus Coxiella.</title>
        <authorList>
            <person name="Beare P.A."/>
            <person name="Unsworth N."/>
            <person name="Andoh M."/>
            <person name="Voth D.E."/>
            <person name="Omsland A."/>
            <person name="Gilk S.D."/>
            <person name="Williams K.P."/>
            <person name="Sobral B.W."/>
            <person name="Kupko J.J. III"/>
            <person name="Porcella S.F."/>
            <person name="Samuel J.E."/>
            <person name="Heinzen R.A."/>
        </authorList>
    </citation>
    <scope>NUCLEOTIDE SEQUENCE [LARGE SCALE GENOMIC DNA]</scope>
    <source>
        <strain>Dugway 5J108-111</strain>
    </source>
</reference>
<keyword id="KW-0030">Aminoacyl-tRNA synthetase</keyword>
<keyword id="KW-0067">ATP-binding</keyword>
<keyword id="KW-0963">Cytoplasm</keyword>
<keyword id="KW-0436">Ligase</keyword>
<keyword id="KW-0547">Nucleotide-binding</keyword>
<keyword id="KW-0648">Protein biosynthesis</keyword>